<protein>
    <recommendedName>
        <fullName evidence="1">tRNA (guanine-N(1)-)-methyltransferase</fullName>
        <ecNumber evidence="1">2.1.1.228</ecNumber>
    </recommendedName>
    <alternativeName>
        <fullName evidence="1">M1G-methyltransferase</fullName>
    </alternativeName>
    <alternativeName>
        <fullName evidence="1">tRNA [GM37] methyltransferase</fullName>
    </alternativeName>
</protein>
<evidence type="ECO:0000255" key="1">
    <source>
        <dbReference type="HAMAP-Rule" id="MF_00605"/>
    </source>
</evidence>
<comment type="function">
    <text evidence="1">Specifically methylates guanosine-37 in various tRNAs.</text>
</comment>
<comment type="catalytic activity">
    <reaction evidence="1">
        <text>guanosine(37) in tRNA + S-adenosyl-L-methionine = N(1)-methylguanosine(37) in tRNA + S-adenosyl-L-homocysteine + H(+)</text>
        <dbReference type="Rhea" id="RHEA:36899"/>
        <dbReference type="Rhea" id="RHEA-COMP:10145"/>
        <dbReference type="Rhea" id="RHEA-COMP:10147"/>
        <dbReference type="ChEBI" id="CHEBI:15378"/>
        <dbReference type="ChEBI" id="CHEBI:57856"/>
        <dbReference type="ChEBI" id="CHEBI:59789"/>
        <dbReference type="ChEBI" id="CHEBI:73542"/>
        <dbReference type="ChEBI" id="CHEBI:74269"/>
        <dbReference type="EC" id="2.1.1.228"/>
    </reaction>
</comment>
<comment type="subunit">
    <text evidence="1">Homodimer.</text>
</comment>
<comment type="subcellular location">
    <subcellularLocation>
        <location evidence="1">Cytoplasm</location>
    </subcellularLocation>
</comment>
<comment type="similarity">
    <text evidence="1">Belongs to the RNA methyltransferase TrmD family.</text>
</comment>
<keyword id="KW-0963">Cytoplasm</keyword>
<keyword id="KW-0489">Methyltransferase</keyword>
<keyword id="KW-1185">Reference proteome</keyword>
<keyword id="KW-0949">S-adenosyl-L-methionine</keyword>
<keyword id="KW-0808">Transferase</keyword>
<keyword id="KW-0819">tRNA processing</keyword>
<accession>A9WP47</accession>
<proteinExistence type="inferred from homology"/>
<feature type="chain" id="PRO_1000082530" description="tRNA (guanine-N(1)-)-methyltransferase">
    <location>
        <begin position="1"/>
        <end position="263"/>
    </location>
</feature>
<feature type="binding site" evidence="1">
    <location>
        <position position="113"/>
    </location>
    <ligand>
        <name>S-adenosyl-L-methionine</name>
        <dbReference type="ChEBI" id="CHEBI:59789"/>
    </ligand>
</feature>
<feature type="binding site" evidence="1">
    <location>
        <begin position="137"/>
        <end position="142"/>
    </location>
    <ligand>
        <name>S-adenosyl-L-methionine</name>
        <dbReference type="ChEBI" id="CHEBI:59789"/>
    </ligand>
</feature>
<name>TRMD_RENSM</name>
<dbReference type="EC" id="2.1.1.228" evidence="1"/>
<dbReference type="EMBL" id="CP000910">
    <property type="protein sequence ID" value="ABY22822.1"/>
    <property type="molecule type" value="Genomic_DNA"/>
</dbReference>
<dbReference type="RefSeq" id="WP_012244511.1">
    <property type="nucleotide sequence ID" value="NC_010168.1"/>
</dbReference>
<dbReference type="SMR" id="A9WP47"/>
<dbReference type="STRING" id="288705.RSal33209_1084"/>
<dbReference type="KEGG" id="rsa:RSal33209_1084"/>
<dbReference type="eggNOG" id="COG0336">
    <property type="taxonomic scope" value="Bacteria"/>
</dbReference>
<dbReference type="HOGENOM" id="CLU_047363_0_0_11"/>
<dbReference type="Proteomes" id="UP000002007">
    <property type="component" value="Chromosome"/>
</dbReference>
<dbReference type="GO" id="GO:0005829">
    <property type="term" value="C:cytosol"/>
    <property type="evidence" value="ECO:0007669"/>
    <property type="project" value="TreeGrafter"/>
</dbReference>
<dbReference type="GO" id="GO:0052906">
    <property type="term" value="F:tRNA (guanine(37)-N1)-methyltransferase activity"/>
    <property type="evidence" value="ECO:0007669"/>
    <property type="project" value="UniProtKB-UniRule"/>
</dbReference>
<dbReference type="GO" id="GO:0002939">
    <property type="term" value="P:tRNA N1-guanine methylation"/>
    <property type="evidence" value="ECO:0007669"/>
    <property type="project" value="TreeGrafter"/>
</dbReference>
<dbReference type="CDD" id="cd18080">
    <property type="entry name" value="TrmD-like"/>
    <property type="match status" value="1"/>
</dbReference>
<dbReference type="FunFam" id="1.10.1270.20:FF:000002">
    <property type="entry name" value="tRNA (guanine-N(1)-)-methyltransferase"/>
    <property type="match status" value="1"/>
</dbReference>
<dbReference type="FunFam" id="3.40.1280.10:FF:000001">
    <property type="entry name" value="tRNA (guanine-N(1)-)-methyltransferase"/>
    <property type="match status" value="1"/>
</dbReference>
<dbReference type="Gene3D" id="3.40.1280.10">
    <property type="match status" value="1"/>
</dbReference>
<dbReference type="Gene3D" id="1.10.1270.20">
    <property type="entry name" value="tRNA(m1g37)methyltransferase, domain 2"/>
    <property type="match status" value="1"/>
</dbReference>
<dbReference type="HAMAP" id="MF_00605">
    <property type="entry name" value="TrmD"/>
    <property type="match status" value="1"/>
</dbReference>
<dbReference type="InterPro" id="IPR029028">
    <property type="entry name" value="Alpha/beta_knot_MTases"/>
</dbReference>
<dbReference type="InterPro" id="IPR023148">
    <property type="entry name" value="tRNA_m1G_MeTrfase_C_sf"/>
</dbReference>
<dbReference type="InterPro" id="IPR002649">
    <property type="entry name" value="tRNA_m1G_MeTrfase_TrmD"/>
</dbReference>
<dbReference type="InterPro" id="IPR029026">
    <property type="entry name" value="tRNA_m1G_MTases_N"/>
</dbReference>
<dbReference type="InterPro" id="IPR016009">
    <property type="entry name" value="tRNA_MeTrfase_TRMD/TRM10"/>
</dbReference>
<dbReference type="NCBIfam" id="NF000648">
    <property type="entry name" value="PRK00026.1"/>
    <property type="match status" value="1"/>
</dbReference>
<dbReference type="NCBIfam" id="TIGR00088">
    <property type="entry name" value="trmD"/>
    <property type="match status" value="1"/>
</dbReference>
<dbReference type="PANTHER" id="PTHR46417">
    <property type="entry name" value="TRNA (GUANINE-N(1)-)-METHYLTRANSFERASE"/>
    <property type="match status" value="1"/>
</dbReference>
<dbReference type="PANTHER" id="PTHR46417:SF1">
    <property type="entry name" value="TRNA (GUANINE-N(1)-)-METHYLTRANSFERASE"/>
    <property type="match status" value="1"/>
</dbReference>
<dbReference type="Pfam" id="PF01746">
    <property type="entry name" value="tRNA_m1G_MT"/>
    <property type="match status" value="1"/>
</dbReference>
<dbReference type="PIRSF" id="PIRSF000386">
    <property type="entry name" value="tRNA_mtase"/>
    <property type="match status" value="1"/>
</dbReference>
<dbReference type="SUPFAM" id="SSF75217">
    <property type="entry name" value="alpha/beta knot"/>
    <property type="match status" value="1"/>
</dbReference>
<gene>
    <name evidence="1" type="primary">trmD</name>
    <name type="ordered locus">RSal33209_1084</name>
</gene>
<sequence>MRLDVISIFPDYLAPLELSLIGKARQDGLLELNVHDLRAFTTDRHRTVDDTPYGGGAGMVMKPEPWALALASVVEPAAKSKPVLIVPSPAGEVFNQRIAEELAAESHLVFACGRYEGIDERVVDWARESFTVRPMSLGDYVLNGGEVAVMAMVEATARLLPGVVGNPDSLLEESHQDGLLEYPVYTKPSAWRGVDIPAVLLSGNHAKIARFRRDEQLRRTAQRRPDLLTQLDPAILDRADLAVLRESGYLTVDGVLTRTSELG</sequence>
<reference key="1">
    <citation type="journal article" date="2008" name="J. Bacteriol.">
        <title>Genome sequence of the fish pathogen Renibacterium salmoninarum suggests reductive evolution away from an environmental Arthrobacter ancestor.</title>
        <authorList>
            <person name="Wiens G.D."/>
            <person name="Rockey D.D."/>
            <person name="Wu Z."/>
            <person name="Chang J."/>
            <person name="Levy R."/>
            <person name="Crane S."/>
            <person name="Chen D.S."/>
            <person name="Capri G.R."/>
            <person name="Burnett J.R."/>
            <person name="Sudheesh P.S."/>
            <person name="Schipma M.J."/>
            <person name="Burd H."/>
            <person name="Bhattacharyya A."/>
            <person name="Rhodes L.D."/>
            <person name="Kaul R."/>
            <person name="Strom M.S."/>
        </authorList>
    </citation>
    <scope>NUCLEOTIDE SEQUENCE [LARGE SCALE GENOMIC DNA]</scope>
    <source>
        <strain>ATCC 33209 / DSM 20767 / JCM 11484 / NBRC 15589 / NCIMB 2235</strain>
    </source>
</reference>
<organism>
    <name type="scientific">Renibacterium salmoninarum (strain ATCC 33209 / DSM 20767 / JCM 11484 / NBRC 15589 / NCIMB 2235)</name>
    <dbReference type="NCBI Taxonomy" id="288705"/>
    <lineage>
        <taxon>Bacteria</taxon>
        <taxon>Bacillati</taxon>
        <taxon>Actinomycetota</taxon>
        <taxon>Actinomycetes</taxon>
        <taxon>Micrococcales</taxon>
        <taxon>Micrococcaceae</taxon>
        <taxon>Renibacterium</taxon>
    </lineage>
</organism>